<keyword id="KW-0560">Oxidoreductase</keyword>
<keyword id="KW-0663">Pyridoxal phosphate</keyword>
<protein>
    <recommendedName>
        <fullName evidence="1">Probable glycine dehydrogenase (decarboxylating) subunit 2</fullName>
        <ecNumber evidence="1">1.4.4.2</ecNumber>
    </recommendedName>
    <alternativeName>
        <fullName evidence="1">Glycine cleavage system P-protein subunit 2</fullName>
    </alternativeName>
    <alternativeName>
        <fullName evidence="1">Glycine decarboxylase subunit 2</fullName>
    </alternativeName>
    <alternativeName>
        <fullName evidence="1">Glycine dehydrogenase (aminomethyl-transferring) subunit 2</fullName>
    </alternativeName>
</protein>
<sequence>MVWRQAKWDEPLIFELNNSGANRQGLLINKDDEIRSEIKEMKIPKNLLRENGPNLPSLSELEVVRHFIRLSQMNFGVDVGIMPLGSCTMKYNPKIEEKATAITESHHPLEDEDHVQGILEMIYELQNWFSEITGMDECSLQVPAGSAGEFAGVLMIKKYHEDHNRNYKDTMLVADTAHGTNPASAAMAGYKVMYVKSNGEGLVDMDILREIVNDKTAGFMLTNPNTLGLFEENILEISKIIHSANAILYYDGANLNGVLGIARPGDMGFDIVHLNLHKTFAVPHGGGGPGAGAICAKGELVNYLPYPMVEKVNGKYRLSKIPKNSVGKIATFYGNVGNLARSFAYLLGLGPQGVQMVGKMSTLATNYLIAKLRDIKELELIAPNRHRKHEVVFSVKQLMENYGVSANDVAKALLDSGFYAPTIYFPPIIEEALMIEPTETESKETLDMFAEALKKIVEDAKRNPEQLLKSPSNTSIARLDQAYANHPSTITPTYRVLKLRRMGKINYLK</sequence>
<evidence type="ECO:0000255" key="1">
    <source>
        <dbReference type="HAMAP-Rule" id="MF_00713"/>
    </source>
</evidence>
<gene>
    <name evidence="1" type="primary">gcvPB</name>
    <name type="ordered locus">YG5714_1298</name>
</gene>
<comment type="function">
    <text evidence="1">The glycine cleavage system catalyzes the degradation of glycine. The P protein binds the alpha-amino group of glycine through its pyridoxal phosphate cofactor; CO(2) is released and the remaining methylamine moiety is then transferred to the lipoamide cofactor of the H protein.</text>
</comment>
<comment type="catalytic activity">
    <reaction evidence="1">
        <text>N(6)-[(R)-lipoyl]-L-lysyl-[glycine-cleavage complex H protein] + glycine + H(+) = N(6)-[(R)-S(8)-aminomethyldihydrolipoyl]-L-lysyl-[glycine-cleavage complex H protein] + CO2</text>
        <dbReference type="Rhea" id="RHEA:24304"/>
        <dbReference type="Rhea" id="RHEA-COMP:10494"/>
        <dbReference type="Rhea" id="RHEA-COMP:10495"/>
        <dbReference type="ChEBI" id="CHEBI:15378"/>
        <dbReference type="ChEBI" id="CHEBI:16526"/>
        <dbReference type="ChEBI" id="CHEBI:57305"/>
        <dbReference type="ChEBI" id="CHEBI:83099"/>
        <dbReference type="ChEBI" id="CHEBI:83143"/>
        <dbReference type="EC" id="1.4.4.2"/>
    </reaction>
</comment>
<comment type="cofactor">
    <cofactor evidence="1">
        <name>pyridoxal 5'-phosphate</name>
        <dbReference type="ChEBI" id="CHEBI:597326"/>
    </cofactor>
</comment>
<comment type="subunit">
    <text evidence="1">The glycine cleavage system is composed of four proteins: P, T, L and H. In this organism, the P 'protein' is a heterodimer of two subunits.</text>
</comment>
<comment type="similarity">
    <text evidence="1">Belongs to the GcvP family. C-terminal subunit subfamily.</text>
</comment>
<dbReference type="EC" id="1.4.4.2" evidence="1"/>
<dbReference type="EMBL" id="CP001403">
    <property type="protein sequence ID" value="ACP45565.1"/>
    <property type="molecule type" value="Genomic_DNA"/>
</dbReference>
<dbReference type="RefSeq" id="WP_012711310.1">
    <property type="nucleotide sequence ID" value="NC_012622.1"/>
</dbReference>
<dbReference type="SMR" id="C3NE26"/>
<dbReference type="GeneID" id="84061617"/>
<dbReference type="KEGG" id="siy:YG5714_1298"/>
<dbReference type="HOGENOM" id="CLU_004620_5_0_2"/>
<dbReference type="Proteomes" id="UP000002308">
    <property type="component" value="Chromosome"/>
</dbReference>
<dbReference type="GO" id="GO:0005829">
    <property type="term" value="C:cytosol"/>
    <property type="evidence" value="ECO:0007669"/>
    <property type="project" value="TreeGrafter"/>
</dbReference>
<dbReference type="GO" id="GO:0005960">
    <property type="term" value="C:glycine cleavage complex"/>
    <property type="evidence" value="ECO:0007669"/>
    <property type="project" value="TreeGrafter"/>
</dbReference>
<dbReference type="GO" id="GO:0016594">
    <property type="term" value="F:glycine binding"/>
    <property type="evidence" value="ECO:0007669"/>
    <property type="project" value="TreeGrafter"/>
</dbReference>
<dbReference type="GO" id="GO:0004375">
    <property type="term" value="F:glycine dehydrogenase (decarboxylating) activity"/>
    <property type="evidence" value="ECO:0007669"/>
    <property type="project" value="UniProtKB-EC"/>
</dbReference>
<dbReference type="GO" id="GO:0030170">
    <property type="term" value="F:pyridoxal phosphate binding"/>
    <property type="evidence" value="ECO:0007669"/>
    <property type="project" value="TreeGrafter"/>
</dbReference>
<dbReference type="GO" id="GO:0019464">
    <property type="term" value="P:glycine decarboxylation via glycine cleavage system"/>
    <property type="evidence" value="ECO:0007669"/>
    <property type="project" value="UniProtKB-UniRule"/>
</dbReference>
<dbReference type="CDD" id="cd00613">
    <property type="entry name" value="GDC-P"/>
    <property type="match status" value="1"/>
</dbReference>
<dbReference type="FunFam" id="3.40.640.10:FF:000224">
    <property type="entry name" value="Probable glycine dehydrogenase (decarboxylating) subunit 2"/>
    <property type="match status" value="1"/>
</dbReference>
<dbReference type="FunFam" id="3.90.1150.10:FF:000014">
    <property type="entry name" value="Probable glycine dehydrogenase (decarboxylating) subunit 2"/>
    <property type="match status" value="1"/>
</dbReference>
<dbReference type="Gene3D" id="6.20.440.10">
    <property type="match status" value="1"/>
</dbReference>
<dbReference type="Gene3D" id="3.90.1150.10">
    <property type="entry name" value="Aspartate Aminotransferase, domain 1"/>
    <property type="match status" value="1"/>
</dbReference>
<dbReference type="Gene3D" id="3.40.640.10">
    <property type="entry name" value="Type I PLP-dependent aspartate aminotransferase-like (Major domain)"/>
    <property type="match status" value="1"/>
</dbReference>
<dbReference type="HAMAP" id="MF_00713">
    <property type="entry name" value="GcvPB"/>
    <property type="match status" value="1"/>
</dbReference>
<dbReference type="InterPro" id="IPR023012">
    <property type="entry name" value="GcvPB"/>
</dbReference>
<dbReference type="InterPro" id="IPR049316">
    <property type="entry name" value="GDC-P_C"/>
</dbReference>
<dbReference type="InterPro" id="IPR049315">
    <property type="entry name" value="GDC-P_N"/>
</dbReference>
<dbReference type="InterPro" id="IPR020581">
    <property type="entry name" value="GDC_P"/>
</dbReference>
<dbReference type="InterPro" id="IPR015424">
    <property type="entry name" value="PyrdxlP-dep_Trfase"/>
</dbReference>
<dbReference type="InterPro" id="IPR015421">
    <property type="entry name" value="PyrdxlP-dep_Trfase_major"/>
</dbReference>
<dbReference type="InterPro" id="IPR015422">
    <property type="entry name" value="PyrdxlP-dep_Trfase_small"/>
</dbReference>
<dbReference type="NCBIfam" id="NF003346">
    <property type="entry name" value="PRK04366.1"/>
    <property type="match status" value="1"/>
</dbReference>
<dbReference type="PANTHER" id="PTHR11773:SF1">
    <property type="entry name" value="GLYCINE DEHYDROGENASE (DECARBOXYLATING), MITOCHONDRIAL"/>
    <property type="match status" value="1"/>
</dbReference>
<dbReference type="PANTHER" id="PTHR11773">
    <property type="entry name" value="GLYCINE DEHYDROGENASE, DECARBOXYLATING"/>
    <property type="match status" value="1"/>
</dbReference>
<dbReference type="Pfam" id="PF21478">
    <property type="entry name" value="GcvP2_C"/>
    <property type="match status" value="1"/>
</dbReference>
<dbReference type="Pfam" id="PF02347">
    <property type="entry name" value="GDC-P"/>
    <property type="match status" value="1"/>
</dbReference>
<dbReference type="SUPFAM" id="SSF53383">
    <property type="entry name" value="PLP-dependent transferases"/>
    <property type="match status" value="1"/>
</dbReference>
<name>GCSPB_SACI7</name>
<proteinExistence type="inferred from homology"/>
<feature type="chain" id="PRO_1000212678" description="Probable glycine dehydrogenase (decarboxylating) subunit 2">
    <location>
        <begin position="1"/>
        <end position="509"/>
    </location>
</feature>
<feature type="modified residue" description="N6-(pyridoxal phosphate)lysine" evidence="1">
    <location>
        <position position="278"/>
    </location>
</feature>
<reference key="1">
    <citation type="journal article" date="2009" name="Proc. Natl. Acad. Sci. U.S.A.">
        <title>Biogeography of the Sulfolobus islandicus pan-genome.</title>
        <authorList>
            <person name="Reno M.L."/>
            <person name="Held N.L."/>
            <person name="Fields C.J."/>
            <person name="Burke P.V."/>
            <person name="Whitaker R.J."/>
        </authorList>
    </citation>
    <scope>NUCLEOTIDE SEQUENCE [LARGE SCALE GENOMIC DNA]</scope>
    <source>
        <strain>Y.G.57.14 / Yellowstone #1</strain>
    </source>
</reference>
<accession>C3NE26</accession>
<organism>
    <name type="scientific">Saccharolobus islandicus (strain Y.G.57.14 / Yellowstone #1)</name>
    <name type="common">Sulfolobus islandicus</name>
    <dbReference type="NCBI Taxonomy" id="439386"/>
    <lineage>
        <taxon>Archaea</taxon>
        <taxon>Thermoproteota</taxon>
        <taxon>Thermoprotei</taxon>
        <taxon>Sulfolobales</taxon>
        <taxon>Sulfolobaceae</taxon>
        <taxon>Saccharolobus</taxon>
    </lineage>
</organism>